<reference key="1">
    <citation type="journal article" date="2007" name="PLoS Genet.">
        <title>Patterns and implications of gene gain and loss in the evolution of Prochlorococcus.</title>
        <authorList>
            <person name="Kettler G.C."/>
            <person name="Martiny A.C."/>
            <person name="Huang K."/>
            <person name="Zucker J."/>
            <person name="Coleman M.L."/>
            <person name="Rodrigue S."/>
            <person name="Chen F."/>
            <person name="Lapidus A."/>
            <person name="Ferriera S."/>
            <person name="Johnson J."/>
            <person name="Steglich C."/>
            <person name="Church G.M."/>
            <person name="Richardson P."/>
            <person name="Chisholm S.W."/>
        </authorList>
    </citation>
    <scope>NUCLEOTIDE SEQUENCE [LARGE SCALE GENOMIC DNA]</scope>
    <source>
        <strain>MIT 9215</strain>
    </source>
</reference>
<proteinExistence type="inferred from homology"/>
<gene>
    <name type="ordered locus">P9215_00191</name>
</gene>
<accession>A8G207</accession>
<sequence>MAGFGLPNFGQLTEAFKKAKQIQQDAQKLQDELENMEIEGKSDDEMIKVWISGNQLPLKVEVQENILNADKEKIEKNILQAIQKAHESSTTTMKERMNDLTGGLNLNLPGFDNSDS</sequence>
<comment type="function">
    <text evidence="1">Binds to DNA and alters its conformation. May be involved in regulation of gene expression, nucleoid organization and DNA protection.</text>
</comment>
<comment type="subunit">
    <text evidence="1">Homodimer.</text>
</comment>
<comment type="subcellular location">
    <subcellularLocation>
        <location evidence="1">Cytoplasm</location>
        <location evidence="1">Nucleoid</location>
    </subcellularLocation>
</comment>
<comment type="similarity">
    <text evidence="1">Belongs to the YbaB/EbfC family.</text>
</comment>
<name>Y019_PROM2</name>
<feature type="chain" id="PRO_1000059202" description="Nucleoid-associated protein P9215_00191">
    <location>
        <begin position="1"/>
        <end position="116"/>
    </location>
</feature>
<keyword id="KW-0963">Cytoplasm</keyword>
<keyword id="KW-0238">DNA-binding</keyword>
<protein>
    <recommendedName>
        <fullName evidence="1">Nucleoid-associated protein P9215_00191</fullName>
    </recommendedName>
</protein>
<dbReference type="EMBL" id="CP000825">
    <property type="protein sequence ID" value="ABV49638.1"/>
    <property type="molecule type" value="Genomic_DNA"/>
</dbReference>
<dbReference type="RefSeq" id="WP_012006824.1">
    <property type="nucleotide sequence ID" value="NC_009840.1"/>
</dbReference>
<dbReference type="SMR" id="A8G207"/>
<dbReference type="STRING" id="93060.P9215_00191"/>
<dbReference type="KEGG" id="pmh:P9215_00191"/>
<dbReference type="eggNOG" id="COG0718">
    <property type="taxonomic scope" value="Bacteria"/>
</dbReference>
<dbReference type="HOGENOM" id="CLU_140930_0_1_3"/>
<dbReference type="OrthoDB" id="487780at2"/>
<dbReference type="Proteomes" id="UP000002014">
    <property type="component" value="Chromosome"/>
</dbReference>
<dbReference type="GO" id="GO:0043590">
    <property type="term" value="C:bacterial nucleoid"/>
    <property type="evidence" value="ECO:0007669"/>
    <property type="project" value="UniProtKB-UniRule"/>
</dbReference>
<dbReference type="GO" id="GO:0005829">
    <property type="term" value="C:cytosol"/>
    <property type="evidence" value="ECO:0007669"/>
    <property type="project" value="TreeGrafter"/>
</dbReference>
<dbReference type="GO" id="GO:0003677">
    <property type="term" value="F:DNA binding"/>
    <property type="evidence" value="ECO:0007669"/>
    <property type="project" value="UniProtKB-UniRule"/>
</dbReference>
<dbReference type="Gene3D" id="3.30.1310.10">
    <property type="entry name" value="Nucleoid-associated protein YbaB-like domain"/>
    <property type="match status" value="1"/>
</dbReference>
<dbReference type="HAMAP" id="MF_00274">
    <property type="entry name" value="DNA_YbaB_EbfC"/>
    <property type="match status" value="1"/>
</dbReference>
<dbReference type="InterPro" id="IPR036894">
    <property type="entry name" value="YbaB-like_sf"/>
</dbReference>
<dbReference type="InterPro" id="IPR004401">
    <property type="entry name" value="YbaB/EbfC"/>
</dbReference>
<dbReference type="NCBIfam" id="TIGR00103">
    <property type="entry name" value="DNA_YbaB_EbfC"/>
    <property type="match status" value="1"/>
</dbReference>
<dbReference type="PANTHER" id="PTHR33449">
    <property type="entry name" value="NUCLEOID-ASSOCIATED PROTEIN YBAB"/>
    <property type="match status" value="1"/>
</dbReference>
<dbReference type="PANTHER" id="PTHR33449:SF1">
    <property type="entry name" value="NUCLEOID-ASSOCIATED PROTEIN YBAB"/>
    <property type="match status" value="1"/>
</dbReference>
<dbReference type="Pfam" id="PF02575">
    <property type="entry name" value="YbaB_DNA_bd"/>
    <property type="match status" value="1"/>
</dbReference>
<dbReference type="PIRSF" id="PIRSF004555">
    <property type="entry name" value="UCP004555"/>
    <property type="match status" value="1"/>
</dbReference>
<dbReference type="SUPFAM" id="SSF82607">
    <property type="entry name" value="YbaB-like"/>
    <property type="match status" value="1"/>
</dbReference>
<organism>
    <name type="scientific">Prochlorococcus marinus (strain MIT 9215)</name>
    <dbReference type="NCBI Taxonomy" id="93060"/>
    <lineage>
        <taxon>Bacteria</taxon>
        <taxon>Bacillati</taxon>
        <taxon>Cyanobacteriota</taxon>
        <taxon>Cyanophyceae</taxon>
        <taxon>Synechococcales</taxon>
        <taxon>Prochlorococcaceae</taxon>
        <taxon>Prochlorococcus</taxon>
    </lineage>
</organism>
<evidence type="ECO:0000255" key="1">
    <source>
        <dbReference type="HAMAP-Rule" id="MF_00274"/>
    </source>
</evidence>